<dbReference type="EMBL" id="CP000142">
    <property type="protein sequence ID" value="ABA87988.1"/>
    <property type="molecule type" value="Genomic_DNA"/>
</dbReference>
<dbReference type="SMR" id="Q3A6L9"/>
<dbReference type="STRING" id="338963.Pcar_0729"/>
<dbReference type="KEGG" id="pca:Pcar_0729"/>
<dbReference type="eggNOG" id="COG0203">
    <property type="taxonomic scope" value="Bacteria"/>
</dbReference>
<dbReference type="HOGENOM" id="CLU_074407_0_1_7"/>
<dbReference type="OrthoDB" id="9809073at2"/>
<dbReference type="Proteomes" id="UP000002534">
    <property type="component" value="Chromosome"/>
</dbReference>
<dbReference type="GO" id="GO:0022625">
    <property type="term" value="C:cytosolic large ribosomal subunit"/>
    <property type="evidence" value="ECO:0007669"/>
    <property type="project" value="TreeGrafter"/>
</dbReference>
<dbReference type="GO" id="GO:0003735">
    <property type="term" value="F:structural constituent of ribosome"/>
    <property type="evidence" value="ECO:0007669"/>
    <property type="project" value="InterPro"/>
</dbReference>
<dbReference type="GO" id="GO:0006412">
    <property type="term" value="P:translation"/>
    <property type="evidence" value="ECO:0007669"/>
    <property type="project" value="UniProtKB-UniRule"/>
</dbReference>
<dbReference type="FunFam" id="3.90.1030.10:FF:000001">
    <property type="entry name" value="50S ribosomal protein L17"/>
    <property type="match status" value="1"/>
</dbReference>
<dbReference type="Gene3D" id="3.90.1030.10">
    <property type="entry name" value="Ribosomal protein L17"/>
    <property type="match status" value="1"/>
</dbReference>
<dbReference type="HAMAP" id="MF_01368">
    <property type="entry name" value="Ribosomal_bL17"/>
    <property type="match status" value="1"/>
</dbReference>
<dbReference type="InterPro" id="IPR000456">
    <property type="entry name" value="Ribosomal_bL17"/>
</dbReference>
<dbReference type="InterPro" id="IPR047859">
    <property type="entry name" value="Ribosomal_bL17_CS"/>
</dbReference>
<dbReference type="InterPro" id="IPR036373">
    <property type="entry name" value="Ribosomal_bL17_sf"/>
</dbReference>
<dbReference type="NCBIfam" id="TIGR00059">
    <property type="entry name" value="L17"/>
    <property type="match status" value="1"/>
</dbReference>
<dbReference type="PANTHER" id="PTHR14413:SF16">
    <property type="entry name" value="LARGE RIBOSOMAL SUBUNIT PROTEIN BL17M"/>
    <property type="match status" value="1"/>
</dbReference>
<dbReference type="PANTHER" id="PTHR14413">
    <property type="entry name" value="RIBOSOMAL PROTEIN L17"/>
    <property type="match status" value="1"/>
</dbReference>
<dbReference type="Pfam" id="PF01196">
    <property type="entry name" value="Ribosomal_L17"/>
    <property type="match status" value="1"/>
</dbReference>
<dbReference type="SUPFAM" id="SSF64263">
    <property type="entry name" value="Prokaryotic ribosomal protein L17"/>
    <property type="match status" value="1"/>
</dbReference>
<dbReference type="PROSITE" id="PS01167">
    <property type="entry name" value="RIBOSOMAL_L17"/>
    <property type="match status" value="1"/>
</dbReference>
<organism>
    <name type="scientific">Syntrophotalea carbinolica (strain DSM 2380 / NBRC 103641 / GraBd1)</name>
    <name type="common">Pelobacter carbinolicus</name>
    <dbReference type="NCBI Taxonomy" id="338963"/>
    <lineage>
        <taxon>Bacteria</taxon>
        <taxon>Pseudomonadati</taxon>
        <taxon>Thermodesulfobacteriota</taxon>
        <taxon>Desulfuromonadia</taxon>
        <taxon>Desulfuromonadales</taxon>
        <taxon>Syntrophotaleaceae</taxon>
        <taxon>Syntrophotalea</taxon>
    </lineage>
</organism>
<feature type="chain" id="PRO_0000267907" description="Large ribosomal subunit protein bL17">
    <location>
        <begin position="1"/>
        <end position="155"/>
    </location>
</feature>
<protein>
    <recommendedName>
        <fullName evidence="1">Large ribosomal subunit protein bL17</fullName>
    </recommendedName>
    <alternativeName>
        <fullName evidence="2">50S ribosomal protein L17</fullName>
    </alternativeName>
</protein>
<keyword id="KW-1185">Reference proteome</keyword>
<keyword id="KW-0687">Ribonucleoprotein</keyword>
<keyword id="KW-0689">Ribosomal protein</keyword>
<sequence length="155" mass="17399">MRHNKSGRRLGRNSSHRAAMMRNMVTSLLEHEKITTTDARAKELRKVVDRMITLGKRGDLHARRQAIKVIQDRKVVGKLFELIAPRYTDRPGGYTRIIKLGNRLGDNAPQVIIELVEEEFTPRVRKAADDKAVAESVATEVAEATEAAADTKQAE</sequence>
<reference key="1">
    <citation type="submission" date="2005-10" db="EMBL/GenBank/DDBJ databases">
        <title>Complete sequence of Pelobacter carbinolicus DSM 2380.</title>
        <authorList>
            <person name="Copeland A."/>
            <person name="Lucas S."/>
            <person name="Lapidus A."/>
            <person name="Barry K."/>
            <person name="Detter J.C."/>
            <person name="Glavina T."/>
            <person name="Hammon N."/>
            <person name="Israni S."/>
            <person name="Pitluck S."/>
            <person name="Chertkov O."/>
            <person name="Schmutz J."/>
            <person name="Larimer F."/>
            <person name="Land M."/>
            <person name="Kyrpides N."/>
            <person name="Ivanova N."/>
            <person name="Richardson P."/>
        </authorList>
    </citation>
    <scope>NUCLEOTIDE SEQUENCE [LARGE SCALE GENOMIC DNA]</scope>
    <source>
        <strain>DSM 2380 / NBRC 103641 / GraBd1</strain>
    </source>
</reference>
<proteinExistence type="inferred from homology"/>
<gene>
    <name evidence="1" type="primary">rplQ</name>
    <name type="ordered locus">Pcar_0729</name>
</gene>
<evidence type="ECO:0000255" key="1">
    <source>
        <dbReference type="HAMAP-Rule" id="MF_01368"/>
    </source>
</evidence>
<evidence type="ECO:0000305" key="2"/>
<accession>Q3A6L9</accession>
<name>RL17_SYNC1</name>
<comment type="subunit">
    <text evidence="1">Part of the 50S ribosomal subunit. Contacts protein L32.</text>
</comment>
<comment type="similarity">
    <text evidence="1">Belongs to the bacterial ribosomal protein bL17 family.</text>
</comment>